<protein>
    <recommendedName>
        <fullName>Apolipoprotein A-I</fullName>
        <shortName>Apo-AI</shortName>
        <shortName>ApoA-I</shortName>
    </recommendedName>
    <component>
        <recommendedName>
            <fullName>Proapolipoprotein A-I</fullName>
            <shortName>ProapoA-I</shortName>
        </recommendedName>
    </component>
    <component>
        <recommendedName>
            <fullName>Truncated apolipoprotein A-I</fullName>
        </recommendedName>
    </component>
</protein>
<name>APOA1_MARMO</name>
<sequence length="264" mass="30502">MKAVVLTVAVFFLTGSQARHFWQQDEPQSSWDRMKDFATVYLDAVKDSGRDYVTQFETSALGKQLNLKLLDNWDSLSSTVSKLREQIGPVTQEFWDKLEKDTVSLRQEMNKDLEEVKLKVQPYLDEFQKRWQEDVERYRQQVEPLGTELREGARQKLQELHEKLSPLGQELRDRARAHVDALRTHLAPYSDELRQRLAARLEALKESSSLADYQAKATEHLSALGEKAKPALEDLRQGLLPVLENLKMSFWSAVDEATKKLTTQ</sequence>
<evidence type="ECO:0000250" key="1"/>
<evidence type="ECO:0000250" key="2">
    <source>
        <dbReference type="UniProtKB" id="G5BQH5"/>
    </source>
</evidence>
<evidence type="ECO:0000250" key="3">
    <source>
        <dbReference type="UniProtKB" id="P02647"/>
    </source>
</evidence>
<evidence type="ECO:0000250" key="4">
    <source>
        <dbReference type="UniProtKB" id="P02648"/>
    </source>
</evidence>
<evidence type="ECO:0000250" key="5">
    <source>
        <dbReference type="UniProtKB" id="P04639"/>
    </source>
</evidence>
<evidence type="ECO:0000255" key="6"/>
<evidence type="ECO:0000305" key="7"/>
<keyword id="KW-0025">Alternative splicing</keyword>
<keyword id="KW-0153">Cholesterol metabolism</keyword>
<keyword id="KW-0325">Glycoprotein</keyword>
<keyword id="KW-0345">HDL</keyword>
<keyword id="KW-0443">Lipid metabolism</keyword>
<keyword id="KW-0445">Lipid transport</keyword>
<keyword id="KW-0449">Lipoprotein</keyword>
<keyword id="KW-0558">Oxidation</keyword>
<keyword id="KW-0564">Palmitate</keyword>
<keyword id="KW-0597">Phosphoprotein</keyword>
<keyword id="KW-1185">Reference proteome</keyword>
<keyword id="KW-0677">Repeat</keyword>
<keyword id="KW-0964">Secreted</keyword>
<keyword id="KW-0732">Signal</keyword>
<keyword id="KW-0753">Steroid metabolism</keyword>
<keyword id="KW-1207">Sterol metabolism</keyword>
<keyword id="KW-0813">Transport</keyword>
<feature type="signal peptide" evidence="6">
    <location>
        <begin position="1"/>
        <end position="18"/>
    </location>
</feature>
<feature type="chain" id="PRO_5003105138" description="Proapolipoprotein A-I">
    <location>
        <begin position="19"/>
        <end position="264"/>
    </location>
</feature>
<feature type="chain" id="PRO_0000450145" description="Apolipoprotein A-I">
    <location>
        <begin position="25"/>
        <end position="264"/>
    </location>
</feature>
<feature type="chain" id="PRO_0000450146" description="Truncated apolipoprotein A-I" evidence="3">
    <location>
        <begin position="25"/>
        <end position="263"/>
    </location>
</feature>
<feature type="repeat" description="1">
    <location>
        <begin position="67"/>
        <end position="88"/>
    </location>
</feature>
<feature type="repeat" description="2">
    <location>
        <begin position="89"/>
        <end position="110"/>
    </location>
</feature>
<feature type="repeat" description="3; half-length">
    <location>
        <begin position="111"/>
        <end position="121"/>
    </location>
</feature>
<feature type="repeat" description="4">
    <location>
        <begin position="122"/>
        <end position="143"/>
    </location>
</feature>
<feature type="repeat" description="5">
    <location>
        <begin position="144"/>
        <end position="165"/>
    </location>
</feature>
<feature type="repeat" description="6">
    <location>
        <begin position="166"/>
        <end position="187"/>
    </location>
</feature>
<feature type="repeat" description="7; truncated">
    <location>
        <begin position="188"/>
        <end position="207"/>
    </location>
</feature>
<feature type="repeat" description="8">
    <location>
        <begin position="208"/>
        <end position="229"/>
    </location>
</feature>
<feature type="repeat" description="9; half-length">
    <location>
        <begin position="230"/>
        <end position="240"/>
    </location>
</feature>
<feature type="repeat" description="10">
    <location>
        <begin position="241"/>
        <end position="264"/>
    </location>
</feature>
<feature type="region of interest" description="10 X approximate tandem repeats">
    <location>
        <begin position="67"/>
        <end position="264"/>
    </location>
</feature>
<feature type="modified residue" description="Methionine sulfoxide" evidence="3">
    <location>
        <position position="109"/>
    </location>
</feature>
<gene>
    <name type="primary">ApoA1</name>
</gene>
<accession>D7PGV9</accession>
<reference key="1">
    <citation type="journal article" date="2011" name="J. Med. Virol.">
        <title>Characterization of woodchuck apolipoprotein A-I: A new tool for drug delivery and identification of altered isoforms in the woodchuck chronic hepatitis model.</title>
        <authorList>
            <person name="Fioravanti J."/>
            <person name="Gomar C."/>
            <person name="Medina-Echeverz J."/>
            <person name="Otano I."/>
            <person name="Benito A."/>
            <person name="Prieto J."/>
            <person name="Gonzalez-Aseguinolaza G."/>
            <person name="Berraondo P."/>
        </authorList>
    </citation>
    <scope>NUCLEOTIDE SEQUENCE [MRNA]</scope>
    <scope>ALTERNATIVE SPLICING</scope>
    <source>
        <strain>W810</strain>
    </source>
</reference>
<reference key="2">
    <citation type="submission" date="2019-04" db="EMBL/GenBank/DDBJ databases">
        <authorList>
            <person name="Alioto T."/>
            <person name="Alioto T."/>
        </authorList>
    </citation>
    <scope>NUCLEOTIDE SEQUENCE [LARGE SCALE GENOMIC DNA]</scope>
</reference>
<organism>
    <name type="scientific">Marmota monax</name>
    <name type="common">Woodchuck</name>
    <dbReference type="NCBI Taxonomy" id="9995"/>
    <lineage>
        <taxon>Eukaryota</taxon>
        <taxon>Metazoa</taxon>
        <taxon>Chordata</taxon>
        <taxon>Craniata</taxon>
        <taxon>Vertebrata</taxon>
        <taxon>Euteleostomi</taxon>
        <taxon>Mammalia</taxon>
        <taxon>Eutheria</taxon>
        <taxon>Euarchontoglires</taxon>
        <taxon>Glires</taxon>
        <taxon>Rodentia</taxon>
        <taxon>Sciuromorpha</taxon>
        <taxon>Sciuridae</taxon>
        <taxon>Xerinae</taxon>
        <taxon>Marmotini</taxon>
        <taxon>Marmota</taxon>
    </lineage>
</organism>
<proteinExistence type="evidence at transcript level"/>
<comment type="function">
    <text evidence="3">Participates in the reverse transport of cholesterol from tissues to the liver for excretion by promoting cholesterol efflux from tissues and by acting as a cofactor for the lecithin cholesterol acyltransferase (LCAT). As part of the SPAP complex, activates spermatozoa motility.</text>
</comment>
<comment type="subunit">
    <text evidence="2 3 5">Homodimer (By similarity). Interacts with APOA1BP and CLU. Component of a sperm activating protein complex (SPAP), consisting of APOA1, an immunoglobulin heavy chain, an immunoglobulin light chain and albumin. Interacts with NDRG1. Interacts with SCGB3A2 (By similarity). Interacts with NAXE and YJEFN3 (By similarity).</text>
</comment>
<comment type="subcellular location">
    <subcellularLocation>
        <location evidence="3">Secreted</location>
    </subcellularLocation>
</comment>
<comment type="alternative products">
    <event type="alternative splicing"/>
    <isoform>
        <id>D7PGV9-1</id>
        <name>1</name>
        <sequence type="displayed"/>
    </isoform>
    <isoform>
        <id>D7PGV9-2</id>
        <name>2</name>
        <sequence type="not described"/>
    </isoform>
</comment>
<comment type="PTM">
    <text evidence="4">Glycosylated.</text>
</comment>
<comment type="PTM">
    <text evidence="4">Palmitoylated.</text>
</comment>
<comment type="PTM">
    <text evidence="1">Phosphorylation sites are present in the extracellular medium.</text>
</comment>
<comment type="similarity">
    <text evidence="7">Belongs to the apolipoprotein A1/A4/E family.</text>
</comment>
<dbReference type="EMBL" id="GU562343">
    <property type="protein sequence ID" value="ADG96165.1"/>
    <property type="molecule type" value="mRNA"/>
</dbReference>
<dbReference type="EMBL" id="CABDUW010000004">
    <property type="protein sequence ID" value="VTJ51515.1"/>
    <property type="molecule type" value="Genomic_DNA"/>
</dbReference>
<dbReference type="EMBL" id="CABDUW010000004">
    <property type="protein sequence ID" value="VTJ51516.1"/>
    <property type="molecule type" value="Genomic_DNA"/>
</dbReference>
<dbReference type="SMR" id="D7PGV9"/>
<dbReference type="Proteomes" id="UP000335636">
    <property type="component" value="Unassembled WGS sequence"/>
</dbReference>
<dbReference type="GO" id="GO:0042627">
    <property type="term" value="C:chylomicron"/>
    <property type="evidence" value="ECO:0007669"/>
    <property type="project" value="TreeGrafter"/>
</dbReference>
<dbReference type="GO" id="GO:1903561">
    <property type="term" value="C:extracellular vesicle"/>
    <property type="evidence" value="ECO:0007669"/>
    <property type="project" value="TreeGrafter"/>
</dbReference>
<dbReference type="GO" id="GO:0034364">
    <property type="term" value="C:high-density lipoprotein particle"/>
    <property type="evidence" value="ECO:0007669"/>
    <property type="project" value="UniProtKB-KW"/>
</dbReference>
<dbReference type="GO" id="GO:0034362">
    <property type="term" value="C:low-density lipoprotein particle"/>
    <property type="evidence" value="ECO:0007669"/>
    <property type="project" value="TreeGrafter"/>
</dbReference>
<dbReference type="GO" id="GO:0034361">
    <property type="term" value="C:very-low-density lipoprotein particle"/>
    <property type="evidence" value="ECO:0007669"/>
    <property type="project" value="TreeGrafter"/>
</dbReference>
<dbReference type="GO" id="GO:0120020">
    <property type="term" value="F:cholesterol transfer activity"/>
    <property type="evidence" value="ECO:0007669"/>
    <property type="project" value="TreeGrafter"/>
</dbReference>
<dbReference type="GO" id="GO:0060228">
    <property type="term" value="F:phosphatidylcholine-sterol O-acyltransferase activator activity"/>
    <property type="evidence" value="ECO:0007669"/>
    <property type="project" value="TreeGrafter"/>
</dbReference>
<dbReference type="GO" id="GO:0005543">
    <property type="term" value="F:phospholipid binding"/>
    <property type="evidence" value="ECO:0007669"/>
    <property type="project" value="TreeGrafter"/>
</dbReference>
<dbReference type="GO" id="GO:0042803">
    <property type="term" value="F:protein homodimerization activity"/>
    <property type="evidence" value="ECO:0000250"/>
    <property type="project" value="UniProtKB"/>
</dbReference>
<dbReference type="GO" id="GO:0055090">
    <property type="term" value="P:acylglycerol homeostasis"/>
    <property type="evidence" value="ECO:0007669"/>
    <property type="project" value="TreeGrafter"/>
</dbReference>
<dbReference type="GO" id="GO:0033344">
    <property type="term" value="P:cholesterol efflux"/>
    <property type="evidence" value="ECO:0007669"/>
    <property type="project" value="TreeGrafter"/>
</dbReference>
<dbReference type="GO" id="GO:0008203">
    <property type="term" value="P:cholesterol metabolic process"/>
    <property type="evidence" value="ECO:0007669"/>
    <property type="project" value="UniProtKB-KW"/>
</dbReference>
<dbReference type="GO" id="GO:0042157">
    <property type="term" value="P:lipoprotein metabolic process"/>
    <property type="evidence" value="ECO:0007669"/>
    <property type="project" value="InterPro"/>
</dbReference>
<dbReference type="GO" id="GO:0033700">
    <property type="term" value="P:phospholipid efflux"/>
    <property type="evidence" value="ECO:0007669"/>
    <property type="project" value="TreeGrafter"/>
</dbReference>
<dbReference type="FunFam" id="1.20.120.20:FF:000001">
    <property type="entry name" value="Apolipoprotein A-I"/>
    <property type="match status" value="1"/>
</dbReference>
<dbReference type="FunFam" id="1.20.5.20:FF:000001">
    <property type="entry name" value="apolipoprotein A-I"/>
    <property type="match status" value="1"/>
</dbReference>
<dbReference type="Gene3D" id="1.20.5.20">
    <property type="match status" value="1"/>
</dbReference>
<dbReference type="Gene3D" id="6.10.140.380">
    <property type="match status" value="1"/>
</dbReference>
<dbReference type="Gene3D" id="1.20.120.20">
    <property type="entry name" value="Apolipoprotein"/>
    <property type="match status" value="1"/>
</dbReference>
<dbReference type="InterPro" id="IPR000074">
    <property type="entry name" value="ApoA_E"/>
</dbReference>
<dbReference type="InterPro" id="IPR050163">
    <property type="entry name" value="Apolipoprotein_A1/A4/E"/>
</dbReference>
<dbReference type="PANTHER" id="PTHR18976">
    <property type="entry name" value="APOLIPOPROTEIN"/>
    <property type="match status" value="1"/>
</dbReference>
<dbReference type="PANTHER" id="PTHR18976:SF11">
    <property type="entry name" value="APOLIPOPROTEIN A-I"/>
    <property type="match status" value="1"/>
</dbReference>
<dbReference type="Pfam" id="PF01442">
    <property type="entry name" value="Apolipoprotein"/>
    <property type="match status" value="1"/>
</dbReference>
<dbReference type="SUPFAM" id="SSF58113">
    <property type="entry name" value="Apolipoprotein A-I"/>
    <property type="match status" value="1"/>
</dbReference>